<sequence length="365" mass="41893">MSTSTLSDGSLDEGTFAAEDVSGVIEDYFFEGAEKLLEIWFDKNQNGATSLRNIPYSELVSMLDIAQCRILHSKSNECMDSYVLSESSMFISDFRIILKTCGTTRLLHAIERILHIAKIYCNMDNVVSVFYSRKNFMHPEKQPYPHSSFETEVDYLEEHFAGGSAYCIGPQRQDRWFLYTMVTPQAVFPFPEHTLEILMNGLPEDVLSTFSPNVSKDGKDCRMKSAINTILPPDIVVHEELFSPCGYSLNGLIPHSDHYITIHVTPEPDFSYVSFETNQHTLNLCEQMLKVLEIFKPSKFLLTIFTNELSNEGKKMQKNLWDLKICGCRRTNLQFLELPTETLIYVQFERIKSAEQVTCKEVFDR</sequence>
<organism>
    <name type="scientific">Onchocerca volvulus</name>
    <dbReference type="NCBI Taxonomy" id="6282"/>
    <lineage>
        <taxon>Eukaryota</taxon>
        <taxon>Metazoa</taxon>
        <taxon>Ecdysozoa</taxon>
        <taxon>Nematoda</taxon>
        <taxon>Chromadorea</taxon>
        <taxon>Rhabditida</taxon>
        <taxon>Spirurina</taxon>
        <taxon>Spiruromorpha</taxon>
        <taxon>Filarioidea</taxon>
        <taxon>Onchocercidae</taxon>
        <taxon>Onchocerca</taxon>
    </lineage>
</organism>
<proteinExistence type="evidence at protein level"/>
<accession>Q27883</accession>
<reference key="1">
    <citation type="journal article" date="1996" name="Biochem. J.">
        <title>A novel trans-spliced mRNA from Onchocerca volvulus encodes a functional S-adenosylmethionine decarboxylase.</title>
        <authorList>
            <person name="Da'Dara A.A."/>
            <person name="Henkle-Duehrsen K."/>
            <person name="Walter R.D."/>
        </authorList>
    </citation>
    <scope>NUCLEOTIDE SEQUENCE [GENOMIC DNA / MRNA]</scope>
    <scope>PARTIAL PROTEIN SEQUENCE</scope>
    <scope>PYRUVATE FORMATION AT SER-87</scope>
</reference>
<feature type="chain" id="PRO_0000029977" description="S-adenosylmethionine decarboxylase beta chain">
    <location>
        <begin position="1"/>
        <end position="86"/>
    </location>
</feature>
<feature type="chain" id="PRO_0000029978" description="S-adenosylmethionine decarboxylase alpha chain">
    <location>
        <begin position="87"/>
        <end position="365"/>
    </location>
</feature>
<feature type="active site" evidence="1">
    <location>
        <position position="31"/>
    </location>
</feature>
<feature type="active site" evidence="1">
    <location>
        <position position="34"/>
    </location>
</feature>
<feature type="active site" description="Schiff-base intermediate with substrate; via pyruvic acid" evidence="1">
    <location>
        <position position="87"/>
    </location>
</feature>
<feature type="active site" description="Proton donor; for catalytic activity" evidence="1">
    <location>
        <position position="101"/>
    </location>
</feature>
<feature type="active site" description="Proton acceptor; for processing activity" evidence="1">
    <location>
        <position position="248"/>
    </location>
</feature>
<feature type="active site" description="Proton acceptor; for processing activity" evidence="1">
    <location>
        <position position="263"/>
    </location>
</feature>
<feature type="site" description="Cleavage (non-hydrolytic); by autolysis">
    <location>
        <begin position="86"/>
        <end position="87"/>
    </location>
</feature>
<feature type="modified residue" description="Pyruvic acid (Ser); by autocatalysis" evidence="2">
    <location>
        <position position="87"/>
    </location>
</feature>
<protein>
    <recommendedName>
        <fullName>S-adenosylmethionine decarboxylase proenzyme</fullName>
        <shortName>AdoMetDC</shortName>
        <shortName>SAMDC</shortName>
        <ecNumber>4.1.1.50</ecNumber>
    </recommendedName>
    <component>
        <recommendedName>
            <fullName>S-adenosylmethionine decarboxylase alpha chain</fullName>
        </recommendedName>
    </component>
    <component>
        <recommendedName>
            <fullName>S-adenosylmethionine decarboxylase beta chain</fullName>
        </recommendedName>
    </component>
</protein>
<name>DCAM_ONCVO</name>
<dbReference type="EC" id="4.1.1.50"/>
<dbReference type="EMBL" id="X95714">
    <property type="protein sequence ID" value="CAA65018.1"/>
    <property type="molecule type" value="Genomic_DNA"/>
</dbReference>
<dbReference type="EMBL" id="X95713">
    <property type="protein sequence ID" value="CAA65017.1"/>
    <property type="molecule type" value="mRNA"/>
</dbReference>
<dbReference type="SMR" id="Q27883"/>
<dbReference type="STRING" id="6282.Q27883"/>
<dbReference type="HOGENOM" id="CLU_023050_1_0_1"/>
<dbReference type="UniPathway" id="UPA00331">
    <property type="reaction ID" value="UER00451"/>
</dbReference>
<dbReference type="Proteomes" id="UP000024404">
    <property type="component" value="Unassembled WGS sequence"/>
</dbReference>
<dbReference type="GO" id="GO:0005829">
    <property type="term" value="C:cytosol"/>
    <property type="evidence" value="ECO:0007669"/>
    <property type="project" value="TreeGrafter"/>
</dbReference>
<dbReference type="GO" id="GO:0004014">
    <property type="term" value="F:adenosylmethionine decarboxylase activity"/>
    <property type="evidence" value="ECO:0007669"/>
    <property type="project" value="UniProtKB-EC"/>
</dbReference>
<dbReference type="GO" id="GO:0008295">
    <property type="term" value="P:spermidine biosynthetic process"/>
    <property type="evidence" value="ECO:0007669"/>
    <property type="project" value="UniProtKB-KW"/>
</dbReference>
<dbReference type="GO" id="GO:0006597">
    <property type="term" value="P:spermine biosynthetic process"/>
    <property type="evidence" value="ECO:0007669"/>
    <property type="project" value="InterPro"/>
</dbReference>
<dbReference type="Gene3D" id="3.60.90.10">
    <property type="entry name" value="S-adenosylmethionine decarboxylase"/>
    <property type="match status" value="1"/>
</dbReference>
<dbReference type="InterPro" id="IPR048283">
    <property type="entry name" value="AdoMetDC-like"/>
</dbReference>
<dbReference type="InterPro" id="IPR001985">
    <property type="entry name" value="S-AdoMet_decarboxylase_euk"/>
</dbReference>
<dbReference type="InterPro" id="IPR016067">
    <property type="entry name" value="S-AdoMet_deCO2ase_core"/>
</dbReference>
<dbReference type="InterPro" id="IPR018166">
    <property type="entry name" value="S-AdoMet_deCO2ase_CS"/>
</dbReference>
<dbReference type="NCBIfam" id="TIGR00535">
    <property type="entry name" value="SAM_DCase"/>
    <property type="match status" value="1"/>
</dbReference>
<dbReference type="PANTHER" id="PTHR11570">
    <property type="entry name" value="S-ADENOSYLMETHIONINE DECARBOXYLASE"/>
    <property type="match status" value="1"/>
</dbReference>
<dbReference type="PANTHER" id="PTHR11570:SF0">
    <property type="entry name" value="S-ADENOSYLMETHIONINE DECARBOXYLASE PROENZYME"/>
    <property type="match status" value="1"/>
</dbReference>
<dbReference type="Pfam" id="PF01536">
    <property type="entry name" value="SAM_decarbox"/>
    <property type="match status" value="1"/>
</dbReference>
<dbReference type="PIRSF" id="PIRSF001355">
    <property type="entry name" value="S-AdenosylMet_decarboxylase"/>
    <property type="match status" value="1"/>
</dbReference>
<dbReference type="SUPFAM" id="SSF56276">
    <property type="entry name" value="S-adenosylmethionine decarboxylase"/>
    <property type="match status" value="1"/>
</dbReference>
<dbReference type="PROSITE" id="PS01336">
    <property type="entry name" value="ADOMETDC"/>
    <property type="match status" value="1"/>
</dbReference>
<gene>
    <name type="primary">smd-1</name>
    <name type="synonym">samdc</name>
</gene>
<keyword id="KW-0068">Autocatalytic cleavage</keyword>
<keyword id="KW-0210">Decarboxylase</keyword>
<keyword id="KW-0903">Direct protein sequencing</keyword>
<keyword id="KW-0456">Lyase</keyword>
<keyword id="KW-0620">Polyamine biosynthesis</keyword>
<keyword id="KW-0670">Pyruvate</keyword>
<keyword id="KW-1185">Reference proteome</keyword>
<keyword id="KW-0949">S-adenosyl-L-methionine</keyword>
<keyword id="KW-0704">Schiff base</keyword>
<keyword id="KW-0745">Spermidine biosynthesis</keyword>
<keyword id="KW-0865">Zymogen</keyword>
<comment type="catalytic activity">
    <reaction>
        <text>S-adenosyl-L-methionine + H(+) = S-adenosyl 3-(methylsulfanyl)propylamine + CO2</text>
        <dbReference type="Rhea" id="RHEA:15981"/>
        <dbReference type="ChEBI" id="CHEBI:15378"/>
        <dbReference type="ChEBI" id="CHEBI:16526"/>
        <dbReference type="ChEBI" id="CHEBI:57443"/>
        <dbReference type="ChEBI" id="CHEBI:59789"/>
        <dbReference type="EC" id="4.1.1.50"/>
    </reaction>
</comment>
<comment type="cofactor">
    <cofactor>
        <name>pyruvate</name>
        <dbReference type="ChEBI" id="CHEBI:15361"/>
    </cofactor>
    <text>Binds 1 pyruvoyl group covalently per subunit.</text>
</comment>
<comment type="pathway">
    <text>Amine and polyamine biosynthesis; S-adenosylmethioninamine biosynthesis; S-adenosylmethioninamine from S-adenosyl-L-methionine: step 1/1.</text>
</comment>
<comment type="subunit">
    <text>Heterotetramer of two alpha and two beta chains.</text>
</comment>
<comment type="PTM">
    <text evidence="1">Is synthesized initially as an inactive proenzyme. Formation of the active enzyme involves a self-maturation process in which the active site pyruvoyl group is generated from an internal serine residue via an autocatalytic post-translational modification. Two non-identical subunits are generated from the proenzyme in this reaction, and the pyruvate is formed at the N-terminus of the alpha chain, which is derived from the carboxyl end of the proenzyme. The post-translation cleavage follows an unusual pathway, termed non-hydrolytic serinolysis, in which the side chain hydroxyl group of the serine supplies its oxygen atom to form the C-terminus of the beta chain, while the remainder of the serine residue undergoes an oxidative deamination to produce ammonia and the pyruvoyl group blocking the N-terminus of the alpha chain (By similarity).</text>
</comment>
<comment type="similarity">
    <text evidence="3">Belongs to the eukaryotic AdoMetDC family.</text>
</comment>
<evidence type="ECO:0000250" key="1"/>
<evidence type="ECO:0000269" key="2">
    <source>
    </source>
</evidence>
<evidence type="ECO:0000305" key="3"/>